<organism>
    <name type="scientific">Salmonella heidelberg (strain SL476)</name>
    <dbReference type="NCBI Taxonomy" id="454169"/>
    <lineage>
        <taxon>Bacteria</taxon>
        <taxon>Pseudomonadati</taxon>
        <taxon>Pseudomonadota</taxon>
        <taxon>Gammaproteobacteria</taxon>
        <taxon>Enterobacterales</taxon>
        <taxon>Enterobacteriaceae</taxon>
        <taxon>Salmonella</taxon>
    </lineage>
</organism>
<reference key="1">
    <citation type="journal article" date="2011" name="J. Bacteriol.">
        <title>Comparative genomics of 28 Salmonella enterica isolates: evidence for CRISPR-mediated adaptive sublineage evolution.</title>
        <authorList>
            <person name="Fricke W.F."/>
            <person name="Mammel M.K."/>
            <person name="McDermott P.F."/>
            <person name="Tartera C."/>
            <person name="White D.G."/>
            <person name="Leclerc J.E."/>
            <person name="Ravel J."/>
            <person name="Cebula T.A."/>
        </authorList>
    </citation>
    <scope>NUCLEOTIDE SEQUENCE [LARGE SCALE GENOMIC DNA]</scope>
    <source>
        <strain>SL476</strain>
    </source>
</reference>
<sequence>MYAVFQSGGKQHRVSEGQTVRLEKLDIATGETIEFAEVLMIANGEEVKIGVPFVDGGVIKAEVVAHGRGEKVKIVKFRRRKHYRKQQGHRQWFTDVKITGISA</sequence>
<gene>
    <name evidence="1" type="primary">rplU</name>
    <name type="ordered locus">SeHA_C3601</name>
</gene>
<proteinExistence type="inferred from homology"/>
<dbReference type="EMBL" id="CP001120">
    <property type="protein sequence ID" value="ACF65937.1"/>
    <property type="molecule type" value="Genomic_DNA"/>
</dbReference>
<dbReference type="RefSeq" id="WP_000271396.1">
    <property type="nucleotide sequence ID" value="NC_011083.1"/>
</dbReference>
<dbReference type="SMR" id="B4TJ24"/>
<dbReference type="GeneID" id="66757643"/>
<dbReference type="KEGG" id="seh:SeHA_C3601"/>
<dbReference type="HOGENOM" id="CLU_061463_3_3_6"/>
<dbReference type="Proteomes" id="UP000001866">
    <property type="component" value="Chromosome"/>
</dbReference>
<dbReference type="GO" id="GO:0005737">
    <property type="term" value="C:cytoplasm"/>
    <property type="evidence" value="ECO:0007669"/>
    <property type="project" value="UniProtKB-ARBA"/>
</dbReference>
<dbReference type="GO" id="GO:1990904">
    <property type="term" value="C:ribonucleoprotein complex"/>
    <property type="evidence" value="ECO:0007669"/>
    <property type="project" value="UniProtKB-KW"/>
</dbReference>
<dbReference type="GO" id="GO:0005840">
    <property type="term" value="C:ribosome"/>
    <property type="evidence" value="ECO:0007669"/>
    <property type="project" value="UniProtKB-KW"/>
</dbReference>
<dbReference type="GO" id="GO:0019843">
    <property type="term" value="F:rRNA binding"/>
    <property type="evidence" value="ECO:0007669"/>
    <property type="project" value="UniProtKB-UniRule"/>
</dbReference>
<dbReference type="GO" id="GO:0003735">
    <property type="term" value="F:structural constituent of ribosome"/>
    <property type="evidence" value="ECO:0007669"/>
    <property type="project" value="InterPro"/>
</dbReference>
<dbReference type="GO" id="GO:0006412">
    <property type="term" value="P:translation"/>
    <property type="evidence" value="ECO:0007669"/>
    <property type="project" value="UniProtKB-UniRule"/>
</dbReference>
<dbReference type="HAMAP" id="MF_01363">
    <property type="entry name" value="Ribosomal_bL21"/>
    <property type="match status" value="1"/>
</dbReference>
<dbReference type="InterPro" id="IPR028909">
    <property type="entry name" value="bL21-like"/>
</dbReference>
<dbReference type="InterPro" id="IPR036164">
    <property type="entry name" value="bL21-like_sf"/>
</dbReference>
<dbReference type="InterPro" id="IPR001787">
    <property type="entry name" value="Ribosomal_bL21"/>
</dbReference>
<dbReference type="InterPro" id="IPR018258">
    <property type="entry name" value="Ribosomal_bL21_CS"/>
</dbReference>
<dbReference type="NCBIfam" id="TIGR00061">
    <property type="entry name" value="L21"/>
    <property type="match status" value="1"/>
</dbReference>
<dbReference type="PANTHER" id="PTHR21349">
    <property type="entry name" value="50S RIBOSOMAL PROTEIN L21"/>
    <property type="match status" value="1"/>
</dbReference>
<dbReference type="PANTHER" id="PTHR21349:SF0">
    <property type="entry name" value="LARGE RIBOSOMAL SUBUNIT PROTEIN BL21M"/>
    <property type="match status" value="1"/>
</dbReference>
<dbReference type="Pfam" id="PF00829">
    <property type="entry name" value="Ribosomal_L21p"/>
    <property type="match status" value="1"/>
</dbReference>
<dbReference type="SUPFAM" id="SSF141091">
    <property type="entry name" value="L21p-like"/>
    <property type="match status" value="1"/>
</dbReference>
<dbReference type="PROSITE" id="PS01169">
    <property type="entry name" value="RIBOSOMAL_L21"/>
    <property type="match status" value="1"/>
</dbReference>
<protein>
    <recommendedName>
        <fullName evidence="1">Large ribosomal subunit protein bL21</fullName>
    </recommendedName>
    <alternativeName>
        <fullName evidence="2">50S ribosomal protein L21</fullName>
    </alternativeName>
</protein>
<evidence type="ECO:0000255" key="1">
    <source>
        <dbReference type="HAMAP-Rule" id="MF_01363"/>
    </source>
</evidence>
<evidence type="ECO:0000305" key="2"/>
<name>RL21_SALHS</name>
<feature type="chain" id="PRO_1000143846" description="Large ribosomal subunit protein bL21">
    <location>
        <begin position="1"/>
        <end position="103"/>
    </location>
</feature>
<comment type="function">
    <text evidence="1">This protein binds to 23S rRNA in the presence of protein L20.</text>
</comment>
<comment type="subunit">
    <text evidence="1">Part of the 50S ribosomal subunit. Contacts protein L20.</text>
</comment>
<comment type="similarity">
    <text evidence="1">Belongs to the bacterial ribosomal protein bL21 family.</text>
</comment>
<keyword id="KW-0687">Ribonucleoprotein</keyword>
<keyword id="KW-0689">Ribosomal protein</keyword>
<keyword id="KW-0694">RNA-binding</keyword>
<keyword id="KW-0699">rRNA-binding</keyword>
<accession>B4TJ24</accession>